<accession>B0BPI7</accession>
<protein>
    <recommendedName>
        <fullName evidence="1">tRNA pseudouridine synthase A</fullName>
        <ecNumber evidence="1">5.4.99.12</ecNumber>
    </recommendedName>
    <alternativeName>
        <fullName evidence="1">tRNA pseudouridine(38-40) synthase</fullName>
    </alternativeName>
    <alternativeName>
        <fullName evidence="1">tRNA pseudouridylate synthase I</fullName>
    </alternativeName>
    <alternativeName>
        <fullName evidence="1">tRNA-uridine isomerase I</fullName>
    </alternativeName>
</protein>
<sequence>MKIALGIEYDGSRYFGWQRQDEVESVQQKLEEALSIVANAPIEVFCAGRTDSGVHGTGQVVHFETQAIRPLQSWCFGTNANLPDDIAVKWAVEVSEDFHARFSATARRYRYIIFNNKLRSAILPKGVSHYHYELDHQKMHEAGQFLLGENDFSSFRAAKCQSHTPWRNVHYLNVSRLGNYIVVDIQANAFVHHMVRNIVGSLIEVGQGRQPVEWIQWLLAQRDRTLAAPTAKAEGLYLVDVHYPERFGIPKTALGPLFLADS</sequence>
<proteinExistence type="inferred from homology"/>
<dbReference type="EC" id="5.4.99.12" evidence="1"/>
<dbReference type="EMBL" id="CP000687">
    <property type="protein sequence ID" value="ABY69472.1"/>
    <property type="molecule type" value="Genomic_DNA"/>
</dbReference>
<dbReference type="RefSeq" id="WP_005604587.1">
    <property type="nucleotide sequence ID" value="NC_010278.1"/>
</dbReference>
<dbReference type="SMR" id="B0BPI7"/>
<dbReference type="KEGG" id="apj:APJL_0914"/>
<dbReference type="HOGENOM" id="CLU_014673_0_2_6"/>
<dbReference type="Proteomes" id="UP000008547">
    <property type="component" value="Chromosome"/>
</dbReference>
<dbReference type="GO" id="GO:0003723">
    <property type="term" value="F:RNA binding"/>
    <property type="evidence" value="ECO:0007669"/>
    <property type="project" value="InterPro"/>
</dbReference>
<dbReference type="GO" id="GO:0160147">
    <property type="term" value="F:tRNA pseudouridine(38-40) synthase activity"/>
    <property type="evidence" value="ECO:0007669"/>
    <property type="project" value="UniProtKB-EC"/>
</dbReference>
<dbReference type="GO" id="GO:0031119">
    <property type="term" value="P:tRNA pseudouridine synthesis"/>
    <property type="evidence" value="ECO:0007669"/>
    <property type="project" value="UniProtKB-UniRule"/>
</dbReference>
<dbReference type="CDD" id="cd02570">
    <property type="entry name" value="PseudoU_synth_EcTruA"/>
    <property type="match status" value="1"/>
</dbReference>
<dbReference type="FunFam" id="3.30.70.580:FF:000001">
    <property type="entry name" value="tRNA pseudouridine synthase A"/>
    <property type="match status" value="1"/>
</dbReference>
<dbReference type="FunFam" id="3.30.70.660:FF:000001">
    <property type="entry name" value="tRNA pseudouridine synthase A"/>
    <property type="match status" value="1"/>
</dbReference>
<dbReference type="Gene3D" id="3.30.70.660">
    <property type="entry name" value="Pseudouridine synthase I, catalytic domain, C-terminal subdomain"/>
    <property type="match status" value="1"/>
</dbReference>
<dbReference type="Gene3D" id="3.30.70.580">
    <property type="entry name" value="Pseudouridine synthase I, catalytic domain, N-terminal subdomain"/>
    <property type="match status" value="1"/>
</dbReference>
<dbReference type="HAMAP" id="MF_00171">
    <property type="entry name" value="TruA"/>
    <property type="match status" value="1"/>
</dbReference>
<dbReference type="InterPro" id="IPR020103">
    <property type="entry name" value="PsdUridine_synth_cat_dom_sf"/>
</dbReference>
<dbReference type="InterPro" id="IPR001406">
    <property type="entry name" value="PsdUridine_synth_TruA"/>
</dbReference>
<dbReference type="InterPro" id="IPR020097">
    <property type="entry name" value="PsdUridine_synth_TruA_a/b_dom"/>
</dbReference>
<dbReference type="InterPro" id="IPR020095">
    <property type="entry name" value="PsdUridine_synth_TruA_C"/>
</dbReference>
<dbReference type="InterPro" id="IPR020094">
    <property type="entry name" value="TruA/RsuA/RluB/E/F_N"/>
</dbReference>
<dbReference type="NCBIfam" id="TIGR00071">
    <property type="entry name" value="hisT_truA"/>
    <property type="match status" value="1"/>
</dbReference>
<dbReference type="PANTHER" id="PTHR11142">
    <property type="entry name" value="PSEUDOURIDYLATE SYNTHASE"/>
    <property type="match status" value="1"/>
</dbReference>
<dbReference type="PANTHER" id="PTHR11142:SF0">
    <property type="entry name" value="TRNA PSEUDOURIDINE SYNTHASE-LIKE 1"/>
    <property type="match status" value="1"/>
</dbReference>
<dbReference type="Pfam" id="PF01416">
    <property type="entry name" value="PseudoU_synth_1"/>
    <property type="match status" value="2"/>
</dbReference>
<dbReference type="PIRSF" id="PIRSF001430">
    <property type="entry name" value="tRNA_psdUrid_synth"/>
    <property type="match status" value="1"/>
</dbReference>
<dbReference type="SUPFAM" id="SSF55120">
    <property type="entry name" value="Pseudouridine synthase"/>
    <property type="match status" value="1"/>
</dbReference>
<organism>
    <name type="scientific">Actinobacillus pleuropneumoniae serotype 3 (strain JL03)</name>
    <dbReference type="NCBI Taxonomy" id="434271"/>
    <lineage>
        <taxon>Bacteria</taxon>
        <taxon>Pseudomonadati</taxon>
        <taxon>Pseudomonadota</taxon>
        <taxon>Gammaproteobacteria</taxon>
        <taxon>Pasteurellales</taxon>
        <taxon>Pasteurellaceae</taxon>
        <taxon>Actinobacillus</taxon>
    </lineage>
</organism>
<evidence type="ECO:0000255" key="1">
    <source>
        <dbReference type="HAMAP-Rule" id="MF_00171"/>
    </source>
</evidence>
<reference key="1">
    <citation type="journal article" date="2008" name="PLoS ONE">
        <title>Genome biology of Actinobacillus pleuropneumoniae JL03, an isolate of serotype 3 prevalent in China.</title>
        <authorList>
            <person name="Xu Z."/>
            <person name="Zhou Y."/>
            <person name="Li L."/>
            <person name="Zhou R."/>
            <person name="Xiao S."/>
            <person name="Wan Y."/>
            <person name="Zhang S."/>
            <person name="Wang K."/>
            <person name="Li W."/>
            <person name="Li L."/>
            <person name="Jin H."/>
            <person name="Kang M."/>
            <person name="Dalai B."/>
            <person name="Li T."/>
            <person name="Liu L."/>
            <person name="Cheng Y."/>
            <person name="Zhang L."/>
            <person name="Xu T."/>
            <person name="Zheng H."/>
            <person name="Pu S."/>
            <person name="Wang B."/>
            <person name="Gu W."/>
            <person name="Zhang X.L."/>
            <person name="Zhu G.-F."/>
            <person name="Wang S."/>
            <person name="Zhao G.-P."/>
            <person name="Chen H."/>
        </authorList>
    </citation>
    <scope>NUCLEOTIDE SEQUENCE [LARGE SCALE GENOMIC DNA]</scope>
    <source>
        <strain>JL03</strain>
    </source>
</reference>
<name>TRUA_ACTPJ</name>
<comment type="function">
    <text evidence="1">Formation of pseudouridine at positions 38, 39 and 40 in the anticodon stem and loop of transfer RNAs.</text>
</comment>
<comment type="catalytic activity">
    <reaction evidence="1">
        <text>uridine(38/39/40) in tRNA = pseudouridine(38/39/40) in tRNA</text>
        <dbReference type="Rhea" id="RHEA:22376"/>
        <dbReference type="Rhea" id="RHEA-COMP:10085"/>
        <dbReference type="Rhea" id="RHEA-COMP:10087"/>
        <dbReference type="ChEBI" id="CHEBI:65314"/>
        <dbReference type="ChEBI" id="CHEBI:65315"/>
        <dbReference type="EC" id="5.4.99.12"/>
    </reaction>
</comment>
<comment type="subunit">
    <text evidence="1">Homodimer.</text>
</comment>
<comment type="similarity">
    <text evidence="1">Belongs to the tRNA pseudouridine synthase TruA family.</text>
</comment>
<keyword id="KW-0413">Isomerase</keyword>
<keyword id="KW-0819">tRNA processing</keyword>
<feature type="chain" id="PRO_1000097714" description="tRNA pseudouridine synthase A">
    <location>
        <begin position="1"/>
        <end position="262"/>
    </location>
</feature>
<feature type="active site" description="Nucleophile" evidence="1">
    <location>
        <position position="51"/>
    </location>
</feature>
<feature type="binding site" evidence="1">
    <location>
        <position position="109"/>
    </location>
    <ligand>
        <name>substrate</name>
    </ligand>
</feature>
<gene>
    <name evidence="1" type="primary">truA</name>
    <name type="ordered locus">APJL_0914</name>
</gene>